<organism>
    <name type="scientific">Shewanella baltica (strain OS195)</name>
    <dbReference type="NCBI Taxonomy" id="399599"/>
    <lineage>
        <taxon>Bacteria</taxon>
        <taxon>Pseudomonadati</taxon>
        <taxon>Pseudomonadota</taxon>
        <taxon>Gammaproteobacteria</taxon>
        <taxon>Alteromonadales</taxon>
        <taxon>Shewanellaceae</taxon>
        <taxon>Shewanella</taxon>
    </lineage>
</organism>
<accession>A9KTL5</accession>
<name>DXS_SHEB9</name>
<comment type="function">
    <text evidence="1">Catalyzes the acyloin condensation reaction between C atoms 2 and 3 of pyruvate and glyceraldehyde 3-phosphate to yield 1-deoxy-D-xylulose-5-phosphate (DXP).</text>
</comment>
<comment type="catalytic activity">
    <reaction evidence="1">
        <text>D-glyceraldehyde 3-phosphate + pyruvate + H(+) = 1-deoxy-D-xylulose 5-phosphate + CO2</text>
        <dbReference type="Rhea" id="RHEA:12605"/>
        <dbReference type="ChEBI" id="CHEBI:15361"/>
        <dbReference type="ChEBI" id="CHEBI:15378"/>
        <dbReference type="ChEBI" id="CHEBI:16526"/>
        <dbReference type="ChEBI" id="CHEBI:57792"/>
        <dbReference type="ChEBI" id="CHEBI:59776"/>
        <dbReference type="EC" id="2.2.1.7"/>
    </reaction>
</comment>
<comment type="cofactor">
    <cofactor evidence="1">
        <name>Mg(2+)</name>
        <dbReference type="ChEBI" id="CHEBI:18420"/>
    </cofactor>
    <text evidence="1">Binds 1 Mg(2+) ion per subunit.</text>
</comment>
<comment type="cofactor">
    <cofactor evidence="1">
        <name>thiamine diphosphate</name>
        <dbReference type="ChEBI" id="CHEBI:58937"/>
    </cofactor>
    <text evidence="1">Binds 1 thiamine pyrophosphate per subunit.</text>
</comment>
<comment type="pathway">
    <text evidence="1">Metabolic intermediate biosynthesis; 1-deoxy-D-xylulose 5-phosphate biosynthesis; 1-deoxy-D-xylulose 5-phosphate from D-glyceraldehyde 3-phosphate and pyruvate: step 1/1.</text>
</comment>
<comment type="subunit">
    <text evidence="1">Homodimer.</text>
</comment>
<comment type="similarity">
    <text evidence="1">Belongs to the transketolase family. DXPS subfamily.</text>
</comment>
<reference key="1">
    <citation type="submission" date="2007-11" db="EMBL/GenBank/DDBJ databases">
        <title>Complete sequence of chromosome of Shewanella baltica OS195.</title>
        <authorList>
            <consortium name="US DOE Joint Genome Institute"/>
            <person name="Copeland A."/>
            <person name="Lucas S."/>
            <person name="Lapidus A."/>
            <person name="Barry K."/>
            <person name="Glavina del Rio T."/>
            <person name="Dalin E."/>
            <person name="Tice H."/>
            <person name="Pitluck S."/>
            <person name="Chain P."/>
            <person name="Malfatti S."/>
            <person name="Shin M."/>
            <person name="Vergez L."/>
            <person name="Schmutz J."/>
            <person name="Larimer F."/>
            <person name="Land M."/>
            <person name="Hauser L."/>
            <person name="Kyrpides N."/>
            <person name="Kim E."/>
            <person name="Brettar I."/>
            <person name="Rodrigues J."/>
            <person name="Konstantinidis K."/>
            <person name="Klappenbach J."/>
            <person name="Hofle M."/>
            <person name="Tiedje J."/>
            <person name="Richardson P."/>
        </authorList>
    </citation>
    <scope>NUCLEOTIDE SEQUENCE [LARGE SCALE GENOMIC DNA]</scope>
    <source>
        <strain>OS195</strain>
    </source>
</reference>
<evidence type="ECO:0000255" key="1">
    <source>
        <dbReference type="HAMAP-Rule" id="MF_00315"/>
    </source>
</evidence>
<keyword id="KW-0414">Isoprene biosynthesis</keyword>
<keyword id="KW-0460">Magnesium</keyword>
<keyword id="KW-0479">Metal-binding</keyword>
<keyword id="KW-0784">Thiamine biosynthesis</keyword>
<keyword id="KW-0786">Thiamine pyrophosphate</keyword>
<keyword id="KW-0808">Transferase</keyword>
<dbReference type="EC" id="2.2.1.7" evidence="1"/>
<dbReference type="EMBL" id="CP000891">
    <property type="protein sequence ID" value="ABX48556.1"/>
    <property type="molecule type" value="Genomic_DNA"/>
</dbReference>
<dbReference type="RefSeq" id="WP_006085152.1">
    <property type="nucleotide sequence ID" value="NC_009997.1"/>
</dbReference>
<dbReference type="SMR" id="A9KTL5"/>
<dbReference type="GeneID" id="11771638"/>
<dbReference type="KEGG" id="sbn:Sbal195_1382"/>
<dbReference type="HOGENOM" id="CLU_009227_1_4_6"/>
<dbReference type="UniPathway" id="UPA00064">
    <property type="reaction ID" value="UER00091"/>
</dbReference>
<dbReference type="Proteomes" id="UP000000770">
    <property type="component" value="Chromosome"/>
</dbReference>
<dbReference type="GO" id="GO:0005829">
    <property type="term" value="C:cytosol"/>
    <property type="evidence" value="ECO:0007669"/>
    <property type="project" value="TreeGrafter"/>
</dbReference>
<dbReference type="GO" id="GO:0008661">
    <property type="term" value="F:1-deoxy-D-xylulose-5-phosphate synthase activity"/>
    <property type="evidence" value="ECO:0007669"/>
    <property type="project" value="UniProtKB-UniRule"/>
</dbReference>
<dbReference type="GO" id="GO:0000287">
    <property type="term" value="F:magnesium ion binding"/>
    <property type="evidence" value="ECO:0007669"/>
    <property type="project" value="UniProtKB-UniRule"/>
</dbReference>
<dbReference type="GO" id="GO:0030976">
    <property type="term" value="F:thiamine pyrophosphate binding"/>
    <property type="evidence" value="ECO:0007669"/>
    <property type="project" value="UniProtKB-UniRule"/>
</dbReference>
<dbReference type="GO" id="GO:0052865">
    <property type="term" value="P:1-deoxy-D-xylulose 5-phosphate biosynthetic process"/>
    <property type="evidence" value="ECO:0007669"/>
    <property type="project" value="UniProtKB-UniPathway"/>
</dbReference>
<dbReference type="GO" id="GO:0019288">
    <property type="term" value="P:isopentenyl diphosphate biosynthetic process, methylerythritol 4-phosphate pathway"/>
    <property type="evidence" value="ECO:0007669"/>
    <property type="project" value="TreeGrafter"/>
</dbReference>
<dbReference type="GO" id="GO:0016114">
    <property type="term" value="P:terpenoid biosynthetic process"/>
    <property type="evidence" value="ECO:0007669"/>
    <property type="project" value="UniProtKB-UniRule"/>
</dbReference>
<dbReference type="GO" id="GO:0009228">
    <property type="term" value="P:thiamine biosynthetic process"/>
    <property type="evidence" value="ECO:0007669"/>
    <property type="project" value="UniProtKB-UniRule"/>
</dbReference>
<dbReference type="CDD" id="cd02007">
    <property type="entry name" value="TPP_DXS"/>
    <property type="match status" value="1"/>
</dbReference>
<dbReference type="CDD" id="cd07033">
    <property type="entry name" value="TPP_PYR_DXS_TK_like"/>
    <property type="match status" value="1"/>
</dbReference>
<dbReference type="FunFam" id="3.40.50.920:FF:000002">
    <property type="entry name" value="1-deoxy-D-xylulose-5-phosphate synthase"/>
    <property type="match status" value="1"/>
</dbReference>
<dbReference type="FunFam" id="3.40.50.970:FF:000005">
    <property type="entry name" value="1-deoxy-D-xylulose-5-phosphate synthase"/>
    <property type="match status" value="1"/>
</dbReference>
<dbReference type="Gene3D" id="3.40.50.920">
    <property type="match status" value="1"/>
</dbReference>
<dbReference type="Gene3D" id="3.40.50.970">
    <property type="match status" value="2"/>
</dbReference>
<dbReference type="HAMAP" id="MF_00315">
    <property type="entry name" value="DXP_synth"/>
    <property type="match status" value="1"/>
</dbReference>
<dbReference type="InterPro" id="IPR005477">
    <property type="entry name" value="Dxylulose-5-P_synthase"/>
</dbReference>
<dbReference type="InterPro" id="IPR029061">
    <property type="entry name" value="THDP-binding"/>
</dbReference>
<dbReference type="InterPro" id="IPR009014">
    <property type="entry name" value="Transketo_C/PFOR_II"/>
</dbReference>
<dbReference type="InterPro" id="IPR005475">
    <property type="entry name" value="Transketolase-like_Pyr-bd"/>
</dbReference>
<dbReference type="InterPro" id="IPR020826">
    <property type="entry name" value="Transketolase_BS"/>
</dbReference>
<dbReference type="InterPro" id="IPR033248">
    <property type="entry name" value="Transketolase_C"/>
</dbReference>
<dbReference type="InterPro" id="IPR049557">
    <property type="entry name" value="Transketolase_CS"/>
</dbReference>
<dbReference type="NCBIfam" id="TIGR00204">
    <property type="entry name" value="dxs"/>
    <property type="match status" value="1"/>
</dbReference>
<dbReference type="NCBIfam" id="NF003933">
    <property type="entry name" value="PRK05444.2-2"/>
    <property type="match status" value="1"/>
</dbReference>
<dbReference type="PANTHER" id="PTHR43322">
    <property type="entry name" value="1-D-DEOXYXYLULOSE 5-PHOSPHATE SYNTHASE-RELATED"/>
    <property type="match status" value="1"/>
</dbReference>
<dbReference type="PANTHER" id="PTHR43322:SF5">
    <property type="entry name" value="1-DEOXY-D-XYLULOSE-5-PHOSPHATE SYNTHASE, CHLOROPLASTIC"/>
    <property type="match status" value="1"/>
</dbReference>
<dbReference type="Pfam" id="PF13292">
    <property type="entry name" value="DXP_synthase_N"/>
    <property type="match status" value="1"/>
</dbReference>
<dbReference type="Pfam" id="PF02779">
    <property type="entry name" value="Transket_pyr"/>
    <property type="match status" value="1"/>
</dbReference>
<dbReference type="Pfam" id="PF02780">
    <property type="entry name" value="Transketolase_C"/>
    <property type="match status" value="1"/>
</dbReference>
<dbReference type="SMART" id="SM00861">
    <property type="entry name" value="Transket_pyr"/>
    <property type="match status" value="1"/>
</dbReference>
<dbReference type="SUPFAM" id="SSF52518">
    <property type="entry name" value="Thiamin diphosphate-binding fold (THDP-binding)"/>
    <property type="match status" value="2"/>
</dbReference>
<dbReference type="SUPFAM" id="SSF52922">
    <property type="entry name" value="TK C-terminal domain-like"/>
    <property type="match status" value="1"/>
</dbReference>
<dbReference type="PROSITE" id="PS00801">
    <property type="entry name" value="TRANSKETOLASE_1"/>
    <property type="match status" value="1"/>
</dbReference>
<dbReference type="PROSITE" id="PS00802">
    <property type="entry name" value="TRANSKETOLASE_2"/>
    <property type="match status" value="1"/>
</dbReference>
<feature type="chain" id="PRO_1000079102" description="1-deoxy-D-xylulose-5-phosphate synthase">
    <location>
        <begin position="1"/>
        <end position="622"/>
    </location>
</feature>
<feature type="binding site" evidence="1">
    <location>
        <position position="80"/>
    </location>
    <ligand>
        <name>thiamine diphosphate</name>
        <dbReference type="ChEBI" id="CHEBI:58937"/>
    </ligand>
</feature>
<feature type="binding site" evidence="1">
    <location>
        <begin position="121"/>
        <end position="123"/>
    </location>
    <ligand>
        <name>thiamine diphosphate</name>
        <dbReference type="ChEBI" id="CHEBI:58937"/>
    </ligand>
</feature>
<feature type="binding site" evidence="1">
    <location>
        <position position="152"/>
    </location>
    <ligand>
        <name>Mg(2+)</name>
        <dbReference type="ChEBI" id="CHEBI:18420"/>
    </ligand>
</feature>
<feature type="binding site" evidence="1">
    <location>
        <begin position="153"/>
        <end position="154"/>
    </location>
    <ligand>
        <name>thiamine diphosphate</name>
        <dbReference type="ChEBI" id="CHEBI:58937"/>
    </ligand>
</feature>
<feature type="binding site" evidence="1">
    <location>
        <position position="181"/>
    </location>
    <ligand>
        <name>Mg(2+)</name>
        <dbReference type="ChEBI" id="CHEBI:18420"/>
    </ligand>
</feature>
<feature type="binding site" evidence="1">
    <location>
        <position position="181"/>
    </location>
    <ligand>
        <name>thiamine diphosphate</name>
        <dbReference type="ChEBI" id="CHEBI:58937"/>
    </ligand>
</feature>
<feature type="binding site" evidence="1">
    <location>
        <position position="288"/>
    </location>
    <ligand>
        <name>thiamine diphosphate</name>
        <dbReference type="ChEBI" id="CHEBI:58937"/>
    </ligand>
</feature>
<feature type="binding site" evidence="1">
    <location>
        <position position="370"/>
    </location>
    <ligand>
        <name>thiamine diphosphate</name>
        <dbReference type="ChEBI" id="CHEBI:58937"/>
    </ligand>
</feature>
<protein>
    <recommendedName>
        <fullName evidence="1">1-deoxy-D-xylulose-5-phosphate synthase</fullName>
        <ecNumber evidence="1">2.2.1.7</ecNumber>
    </recommendedName>
    <alternativeName>
        <fullName evidence="1">1-deoxyxylulose-5-phosphate synthase</fullName>
        <shortName evidence="1">DXP synthase</shortName>
        <shortName evidence="1">DXPS</shortName>
    </alternativeName>
</protein>
<sequence length="622" mass="68019">MSLDISQFPVLAQANTPNELRQLPQALLPQVADELREFLLKSVGISSGHFASGLGTVELTVALHYVYNTPFDRLIWDVGHQAYPHKILTGRRDKMHTIRQKDGLHPFPWREESEYDTFSVGHSGTSISAALAMAIAAEKEQAGRKVVAVIGDGAMTGGMVFEAMNHAGDLHNDMLVVLNDNEMSISENVGALNNHLAQLMSGRFYTTLREGGKKVLKGMPVIKEMAKRTEEHLKGMVVPGTLFEELGFNYIGPIDGHDVDALVETMRNMRNLKGPQVLHIMTKKGRGYEPAEKDPIGWHAVPKFDPSLFKKPATKPGLPTFSQVFGKWLCDIAEQDEKVLAITPAMREGSGMVEFSQRFPKQYFDAAIAEQHAVTLAAGFACEGFKPVVAIYSTFLQRAYDQLIHDVALQQLPVLFAIDRGGIVGADGPTHQGAFDLSFMRCIPNMVIMAPSDENECRQMLYTGYCYDAGPSAVRYPRGSATGAMQVEAMTALPIGKGVIKRVGKRIAILNFGTLLASALTAAESLDATVVDMRFVKPLDVDLVKEMAQTHEVLVTVEENAIMGGAGAGVLEQLQKLRMPKAVLQIGLPDEFIKHGSPEEVTHDLQLDAEGILAQINAYLAQ</sequence>
<gene>
    <name evidence="1" type="primary">dxs</name>
    <name type="ordered locus">Sbal195_1382</name>
</gene>
<proteinExistence type="inferred from homology"/>